<accession>B5YQ81</accession>
<name>IDI_ECO5E</name>
<reference key="1">
    <citation type="journal article" date="2011" name="Proc. Natl. Acad. Sci. U.S.A.">
        <title>Genomic anatomy of Escherichia coli O157:H7 outbreaks.</title>
        <authorList>
            <person name="Eppinger M."/>
            <person name="Mammel M.K."/>
            <person name="Leclerc J.E."/>
            <person name="Ravel J."/>
            <person name="Cebula T.A."/>
        </authorList>
    </citation>
    <scope>NUCLEOTIDE SEQUENCE [LARGE SCALE GENOMIC DNA]</scope>
    <source>
        <strain>EC4115 / EHEC</strain>
    </source>
</reference>
<feature type="chain" id="PRO_1000099436" description="Isopentenyl-diphosphate Delta-isomerase">
    <location>
        <begin position="1"/>
        <end position="182"/>
    </location>
</feature>
<feature type="domain" description="Nudix hydrolase">
    <location>
        <begin position="30"/>
        <end position="164"/>
    </location>
</feature>
<feature type="active site" evidence="1">
    <location>
        <position position="67"/>
    </location>
</feature>
<feature type="active site" evidence="1">
    <location>
        <position position="116"/>
    </location>
</feature>
<feature type="binding site" evidence="1">
    <location>
        <position position="25"/>
    </location>
    <ligand>
        <name>Mn(2+)</name>
        <dbReference type="ChEBI" id="CHEBI:29035"/>
    </ligand>
</feature>
<feature type="binding site" evidence="1">
    <location>
        <position position="32"/>
    </location>
    <ligand>
        <name>Mn(2+)</name>
        <dbReference type="ChEBI" id="CHEBI:29035"/>
    </ligand>
</feature>
<feature type="binding site" evidence="1">
    <location>
        <position position="69"/>
    </location>
    <ligand>
        <name>Mn(2+)</name>
        <dbReference type="ChEBI" id="CHEBI:29035"/>
    </ligand>
</feature>
<feature type="binding site" evidence="1">
    <location>
        <position position="87"/>
    </location>
    <ligand>
        <name>Mg(2+)</name>
        <dbReference type="ChEBI" id="CHEBI:18420"/>
    </ligand>
</feature>
<feature type="binding site" evidence="1">
    <location>
        <position position="114"/>
    </location>
    <ligand>
        <name>Mn(2+)</name>
        <dbReference type="ChEBI" id="CHEBI:29035"/>
    </ligand>
</feature>
<feature type="binding site" evidence="1">
    <location>
        <position position="116"/>
    </location>
    <ligand>
        <name>Mn(2+)</name>
        <dbReference type="ChEBI" id="CHEBI:29035"/>
    </ligand>
</feature>
<comment type="function">
    <text evidence="1">Catalyzes the 1,3-allylic rearrangement of the homoallylic substrate isopentenyl (IPP) to its highly electrophilic allylic isomer, dimethylallyl diphosphate (DMAPP).</text>
</comment>
<comment type="catalytic activity">
    <reaction evidence="1">
        <text>isopentenyl diphosphate = dimethylallyl diphosphate</text>
        <dbReference type="Rhea" id="RHEA:23284"/>
        <dbReference type="ChEBI" id="CHEBI:57623"/>
        <dbReference type="ChEBI" id="CHEBI:128769"/>
        <dbReference type="EC" id="5.3.3.2"/>
    </reaction>
</comment>
<comment type="cofactor">
    <cofactor evidence="1">
        <name>Mg(2+)</name>
        <dbReference type="ChEBI" id="CHEBI:18420"/>
    </cofactor>
    <text evidence="1">Binds 1 Mg(2+) ion per subunit. The magnesium ion binds only when substrate is bound.</text>
</comment>
<comment type="cofactor">
    <cofactor evidence="1">
        <name>Mn(2+)</name>
        <dbReference type="ChEBI" id="CHEBI:29035"/>
    </cofactor>
    <text evidence="1">Binds 1 Mn(2+) ion per subunit.</text>
</comment>
<comment type="pathway">
    <text evidence="1">Isoprenoid biosynthesis; dimethylallyl diphosphate biosynthesis; dimethylallyl diphosphate from isopentenyl diphosphate: step 1/1.</text>
</comment>
<comment type="subunit">
    <text evidence="1">Homodimer.</text>
</comment>
<comment type="subcellular location">
    <subcellularLocation>
        <location evidence="1">Cytoplasm</location>
    </subcellularLocation>
</comment>
<comment type="similarity">
    <text evidence="1">Belongs to the IPP isomerase type 1 family.</text>
</comment>
<gene>
    <name evidence="1" type="primary">idi</name>
    <name type="ordered locus">ECH74115_4179</name>
</gene>
<dbReference type="EC" id="5.3.3.2" evidence="1"/>
<dbReference type="EMBL" id="CP001164">
    <property type="protein sequence ID" value="ACI35958.1"/>
    <property type="molecule type" value="Genomic_DNA"/>
</dbReference>
<dbReference type="RefSeq" id="WP_001192814.1">
    <property type="nucleotide sequence ID" value="NC_011353.1"/>
</dbReference>
<dbReference type="SMR" id="B5YQ81"/>
<dbReference type="GeneID" id="93779113"/>
<dbReference type="KEGG" id="ecf:ECH74115_4179"/>
<dbReference type="HOGENOM" id="CLU_060552_2_0_6"/>
<dbReference type="UniPathway" id="UPA00059">
    <property type="reaction ID" value="UER00104"/>
</dbReference>
<dbReference type="GO" id="GO:0005737">
    <property type="term" value="C:cytoplasm"/>
    <property type="evidence" value="ECO:0007669"/>
    <property type="project" value="UniProtKB-SubCell"/>
</dbReference>
<dbReference type="GO" id="GO:0004452">
    <property type="term" value="F:isopentenyl-diphosphate delta-isomerase activity"/>
    <property type="evidence" value="ECO:0007669"/>
    <property type="project" value="UniProtKB-UniRule"/>
</dbReference>
<dbReference type="GO" id="GO:0046872">
    <property type="term" value="F:metal ion binding"/>
    <property type="evidence" value="ECO:0007669"/>
    <property type="project" value="UniProtKB-KW"/>
</dbReference>
<dbReference type="GO" id="GO:0050992">
    <property type="term" value="P:dimethylallyl diphosphate biosynthetic process"/>
    <property type="evidence" value="ECO:0007669"/>
    <property type="project" value="UniProtKB-UniRule"/>
</dbReference>
<dbReference type="GO" id="GO:0008299">
    <property type="term" value="P:isoprenoid biosynthetic process"/>
    <property type="evidence" value="ECO:0007669"/>
    <property type="project" value="UniProtKB-KW"/>
</dbReference>
<dbReference type="CDD" id="cd02885">
    <property type="entry name" value="NUDIX_IPP_Isomerase"/>
    <property type="match status" value="1"/>
</dbReference>
<dbReference type="FunFam" id="3.90.79.10:FF:000009">
    <property type="entry name" value="Isopentenyl-diphosphate Delta-isomerase"/>
    <property type="match status" value="1"/>
</dbReference>
<dbReference type="Gene3D" id="3.90.79.10">
    <property type="entry name" value="Nucleoside Triphosphate Pyrophosphohydrolase"/>
    <property type="match status" value="1"/>
</dbReference>
<dbReference type="HAMAP" id="MF_00202">
    <property type="entry name" value="Idi"/>
    <property type="match status" value="1"/>
</dbReference>
<dbReference type="InterPro" id="IPR056375">
    <property type="entry name" value="Idi_bact"/>
</dbReference>
<dbReference type="InterPro" id="IPR011876">
    <property type="entry name" value="IsopentenylPP_isomerase_typ1"/>
</dbReference>
<dbReference type="InterPro" id="IPR015797">
    <property type="entry name" value="NUDIX_hydrolase-like_dom_sf"/>
</dbReference>
<dbReference type="InterPro" id="IPR000086">
    <property type="entry name" value="NUDIX_hydrolase_dom"/>
</dbReference>
<dbReference type="NCBIfam" id="TIGR02150">
    <property type="entry name" value="IPP_isom_1"/>
    <property type="match status" value="1"/>
</dbReference>
<dbReference type="NCBIfam" id="NF002995">
    <property type="entry name" value="PRK03759.1"/>
    <property type="match status" value="1"/>
</dbReference>
<dbReference type="PANTHER" id="PTHR10885">
    <property type="entry name" value="ISOPENTENYL-DIPHOSPHATE DELTA-ISOMERASE"/>
    <property type="match status" value="1"/>
</dbReference>
<dbReference type="PANTHER" id="PTHR10885:SF0">
    <property type="entry name" value="ISOPENTENYL-DIPHOSPHATE DELTA-ISOMERASE"/>
    <property type="match status" value="1"/>
</dbReference>
<dbReference type="Pfam" id="PF00293">
    <property type="entry name" value="NUDIX"/>
    <property type="match status" value="1"/>
</dbReference>
<dbReference type="PIRSF" id="PIRSF018427">
    <property type="entry name" value="Isopntndiph_ism"/>
    <property type="match status" value="1"/>
</dbReference>
<dbReference type="SUPFAM" id="SSF55811">
    <property type="entry name" value="Nudix"/>
    <property type="match status" value="1"/>
</dbReference>
<dbReference type="PROSITE" id="PS51462">
    <property type="entry name" value="NUDIX"/>
    <property type="match status" value="1"/>
</dbReference>
<keyword id="KW-0963">Cytoplasm</keyword>
<keyword id="KW-0413">Isomerase</keyword>
<keyword id="KW-0414">Isoprene biosynthesis</keyword>
<keyword id="KW-0460">Magnesium</keyword>
<keyword id="KW-0464">Manganese</keyword>
<keyword id="KW-0479">Metal-binding</keyword>
<proteinExistence type="inferred from homology"/>
<organism>
    <name type="scientific">Escherichia coli O157:H7 (strain EC4115 / EHEC)</name>
    <dbReference type="NCBI Taxonomy" id="444450"/>
    <lineage>
        <taxon>Bacteria</taxon>
        <taxon>Pseudomonadati</taxon>
        <taxon>Pseudomonadota</taxon>
        <taxon>Gammaproteobacteria</taxon>
        <taxon>Enterobacterales</taxon>
        <taxon>Enterobacteriaceae</taxon>
        <taxon>Escherichia</taxon>
    </lineage>
</organism>
<sequence length="182" mass="20373">MQTEHVILLNAQGVPTGTLEKYAAHTADTRLHLAFSSWLFNAKGQLLVTRRALSKKAWPGVWTNSVCGHPQLGESNEDAVIRRCRYELGVEITPPESIYPDFRYRATDPNGIVENEVCPVFAARTTSALQINDDEVMDYQWCDLADVLHGIDATPWAFSPWMVMQAANSEARKLLSAFAQHN</sequence>
<protein>
    <recommendedName>
        <fullName evidence="1">Isopentenyl-diphosphate Delta-isomerase</fullName>
        <shortName evidence="1">IPP isomerase</shortName>
        <ecNumber evidence="1">5.3.3.2</ecNumber>
    </recommendedName>
    <alternativeName>
        <fullName evidence="1">IPP:DMAPP isomerase</fullName>
    </alternativeName>
    <alternativeName>
        <fullName evidence="1">Isopentenyl pyrophosphate isomerase</fullName>
    </alternativeName>
</protein>
<evidence type="ECO:0000255" key="1">
    <source>
        <dbReference type="HAMAP-Rule" id="MF_00202"/>
    </source>
</evidence>